<keyword id="KW-0131">Cell cycle</keyword>
<keyword id="KW-0132">Cell division</keyword>
<keyword id="KW-1003">Cell membrane</keyword>
<keyword id="KW-0133">Cell shape</keyword>
<keyword id="KW-0961">Cell wall biogenesis/degradation</keyword>
<keyword id="KW-0460">Magnesium</keyword>
<keyword id="KW-0472">Membrane</keyword>
<keyword id="KW-0479">Metal-binding</keyword>
<keyword id="KW-0573">Peptidoglycan synthesis</keyword>
<keyword id="KW-1185">Reference proteome</keyword>
<keyword id="KW-0808">Transferase</keyword>
<keyword id="KW-0812">Transmembrane</keyword>
<keyword id="KW-1133">Transmembrane helix</keyword>
<dbReference type="EC" id="2.7.8.13" evidence="1"/>
<dbReference type="EMBL" id="AP008934">
    <property type="protein sequence ID" value="BAE18734.1"/>
    <property type="molecule type" value="Genomic_DNA"/>
</dbReference>
<dbReference type="RefSeq" id="WP_011303326.1">
    <property type="nucleotide sequence ID" value="NZ_MTGA01000034.1"/>
</dbReference>
<dbReference type="SMR" id="Q49WW4"/>
<dbReference type="GeneID" id="3615333"/>
<dbReference type="KEGG" id="ssp:SSP1589"/>
<dbReference type="PATRIC" id="fig|342451.11.peg.1591"/>
<dbReference type="eggNOG" id="COG0472">
    <property type="taxonomic scope" value="Bacteria"/>
</dbReference>
<dbReference type="HOGENOM" id="CLU_023982_0_1_9"/>
<dbReference type="OrthoDB" id="9805475at2"/>
<dbReference type="UniPathway" id="UPA00219"/>
<dbReference type="Proteomes" id="UP000006371">
    <property type="component" value="Chromosome"/>
</dbReference>
<dbReference type="GO" id="GO:0005886">
    <property type="term" value="C:plasma membrane"/>
    <property type="evidence" value="ECO:0007669"/>
    <property type="project" value="UniProtKB-SubCell"/>
</dbReference>
<dbReference type="GO" id="GO:0046872">
    <property type="term" value="F:metal ion binding"/>
    <property type="evidence" value="ECO:0007669"/>
    <property type="project" value="UniProtKB-KW"/>
</dbReference>
<dbReference type="GO" id="GO:0008963">
    <property type="term" value="F:phospho-N-acetylmuramoyl-pentapeptide-transferase activity"/>
    <property type="evidence" value="ECO:0007669"/>
    <property type="project" value="UniProtKB-UniRule"/>
</dbReference>
<dbReference type="GO" id="GO:0051301">
    <property type="term" value="P:cell division"/>
    <property type="evidence" value="ECO:0007669"/>
    <property type="project" value="UniProtKB-KW"/>
</dbReference>
<dbReference type="GO" id="GO:0071555">
    <property type="term" value="P:cell wall organization"/>
    <property type="evidence" value="ECO:0007669"/>
    <property type="project" value="UniProtKB-KW"/>
</dbReference>
<dbReference type="GO" id="GO:0009252">
    <property type="term" value="P:peptidoglycan biosynthetic process"/>
    <property type="evidence" value="ECO:0007669"/>
    <property type="project" value="UniProtKB-UniRule"/>
</dbReference>
<dbReference type="GO" id="GO:0008360">
    <property type="term" value="P:regulation of cell shape"/>
    <property type="evidence" value="ECO:0007669"/>
    <property type="project" value="UniProtKB-KW"/>
</dbReference>
<dbReference type="CDD" id="cd06852">
    <property type="entry name" value="GT_MraY"/>
    <property type="match status" value="1"/>
</dbReference>
<dbReference type="HAMAP" id="MF_00038">
    <property type="entry name" value="MraY"/>
    <property type="match status" value="1"/>
</dbReference>
<dbReference type="InterPro" id="IPR000715">
    <property type="entry name" value="Glycosyl_transferase_4"/>
</dbReference>
<dbReference type="InterPro" id="IPR003524">
    <property type="entry name" value="PNAcMuramoyl-5peptid_Trfase"/>
</dbReference>
<dbReference type="InterPro" id="IPR018480">
    <property type="entry name" value="PNAcMuramoyl-5peptid_Trfase_CS"/>
</dbReference>
<dbReference type="NCBIfam" id="TIGR00445">
    <property type="entry name" value="mraY"/>
    <property type="match status" value="1"/>
</dbReference>
<dbReference type="PANTHER" id="PTHR22926">
    <property type="entry name" value="PHOSPHO-N-ACETYLMURAMOYL-PENTAPEPTIDE-TRANSFERASE"/>
    <property type="match status" value="1"/>
</dbReference>
<dbReference type="PANTHER" id="PTHR22926:SF5">
    <property type="entry name" value="PHOSPHO-N-ACETYLMURAMOYL-PENTAPEPTIDE-TRANSFERASE HOMOLOG"/>
    <property type="match status" value="1"/>
</dbReference>
<dbReference type="Pfam" id="PF00953">
    <property type="entry name" value="Glycos_transf_4"/>
    <property type="match status" value="1"/>
</dbReference>
<dbReference type="PROSITE" id="PS01347">
    <property type="entry name" value="MRAY_1"/>
    <property type="match status" value="1"/>
</dbReference>
<dbReference type="PROSITE" id="PS01348">
    <property type="entry name" value="MRAY_2"/>
    <property type="match status" value="1"/>
</dbReference>
<accession>Q49WW4</accession>
<sequence length="321" mass="35279">MVYLLAIIALLITFILVPVLIPTLKRMKFGQSIREEGPQSHMKKTGTPTMGGLTFLISIIITSILAIIFIDNSNPIILLLFVTIGFGLIGFIDDYIIVVKKNNQGLTSKQKFLAQIAIAVIFFILSQVFNLTDFSTGIHIPFINFEIPLSIAYVIFIVFWQVGFSNAVNLTDGLDGLATGLSIIGFVMYAIMAYFQGATSIGLFCIIMIFALLGFLPFNLNPAKVFMGDTGSLALGGIFATISIMLNQELSLLFIGFVFVAETLSVMIQVTSFKLTGKRIFKMSPLHHHFELVGWNETKVVTVFWTVGLITGLIGLWIGVS</sequence>
<feature type="chain" id="PRO_0000235487" description="Phospho-N-acetylmuramoyl-pentapeptide-transferase">
    <location>
        <begin position="1"/>
        <end position="321"/>
    </location>
</feature>
<feature type="transmembrane region" description="Helical" evidence="1">
    <location>
        <begin position="1"/>
        <end position="21"/>
    </location>
</feature>
<feature type="transmembrane region" description="Helical" evidence="1">
    <location>
        <begin position="50"/>
        <end position="70"/>
    </location>
</feature>
<feature type="transmembrane region" description="Helical" evidence="1">
    <location>
        <begin position="76"/>
        <end position="96"/>
    </location>
</feature>
<feature type="transmembrane region" description="Helical" evidence="1">
    <location>
        <begin position="112"/>
        <end position="132"/>
    </location>
</feature>
<feature type="transmembrane region" description="Helical" evidence="1">
    <location>
        <begin position="140"/>
        <end position="160"/>
    </location>
</feature>
<feature type="transmembrane region" description="Helical" evidence="1">
    <location>
        <begin position="173"/>
        <end position="193"/>
    </location>
</feature>
<feature type="transmembrane region" description="Helical" evidence="1">
    <location>
        <begin position="198"/>
        <end position="218"/>
    </location>
</feature>
<feature type="transmembrane region" description="Helical" evidence="1">
    <location>
        <begin position="225"/>
        <end position="245"/>
    </location>
</feature>
<feature type="transmembrane region" description="Helical" evidence="1">
    <location>
        <begin position="250"/>
        <end position="270"/>
    </location>
</feature>
<feature type="transmembrane region" description="Helical" evidence="1">
    <location>
        <begin position="300"/>
        <end position="320"/>
    </location>
</feature>
<gene>
    <name evidence="1" type="primary">mraY</name>
    <name type="ordered locus">SSP1589</name>
</gene>
<comment type="function">
    <text evidence="1">Catalyzes the initial step of the lipid cycle reactions in the biosynthesis of the cell wall peptidoglycan: transfers peptidoglycan precursor phospho-MurNAc-pentapeptide from UDP-MurNAc-pentapeptide onto the lipid carrier undecaprenyl phosphate, yielding undecaprenyl-pyrophosphoryl-MurNAc-pentapeptide, known as lipid I.</text>
</comment>
<comment type="catalytic activity">
    <reaction evidence="1">
        <text>UDP-N-acetyl-alpha-D-muramoyl-L-alanyl-gamma-D-glutamyl-L-lysyl-D-alanyl-D-alanine + di-trans,octa-cis-undecaprenyl phosphate = Mur2Ac(oyl-L-Ala-gamma-D-Glu-L-Lys-D-Ala-D-Ala)-di-trans,octa-cis-undecaprenyl diphosphate + UMP</text>
        <dbReference type="Rhea" id="RHEA:21920"/>
        <dbReference type="ChEBI" id="CHEBI:57865"/>
        <dbReference type="ChEBI" id="CHEBI:60032"/>
        <dbReference type="ChEBI" id="CHEBI:60392"/>
        <dbReference type="ChEBI" id="CHEBI:70758"/>
        <dbReference type="EC" id="2.7.8.13"/>
    </reaction>
</comment>
<comment type="cofactor">
    <cofactor evidence="1">
        <name>Mg(2+)</name>
        <dbReference type="ChEBI" id="CHEBI:18420"/>
    </cofactor>
</comment>
<comment type="pathway">
    <text evidence="1">Cell wall biogenesis; peptidoglycan biosynthesis.</text>
</comment>
<comment type="subcellular location">
    <subcellularLocation>
        <location evidence="1">Cell membrane</location>
        <topology evidence="1">Multi-pass membrane protein</topology>
    </subcellularLocation>
</comment>
<comment type="similarity">
    <text evidence="1">Belongs to the glycosyltransferase 4 family. MraY subfamily.</text>
</comment>
<name>MRAY_STAS1</name>
<proteinExistence type="inferred from homology"/>
<evidence type="ECO:0000255" key="1">
    <source>
        <dbReference type="HAMAP-Rule" id="MF_00038"/>
    </source>
</evidence>
<protein>
    <recommendedName>
        <fullName evidence="1">Phospho-N-acetylmuramoyl-pentapeptide-transferase</fullName>
        <ecNumber evidence="1">2.7.8.13</ecNumber>
    </recommendedName>
    <alternativeName>
        <fullName evidence="1">UDP-MurNAc-pentapeptide phosphotransferase</fullName>
    </alternativeName>
</protein>
<organism>
    <name type="scientific">Staphylococcus saprophyticus subsp. saprophyticus (strain ATCC 15305 / DSM 20229 / NCIMB 8711 / NCTC 7292 / S-41)</name>
    <dbReference type="NCBI Taxonomy" id="342451"/>
    <lineage>
        <taxon>Bacteria</taxon>
        <taxon>Bacillati</taxon>
        <taxon>Bacillota</taxon>
        <taxon>Bacilli</taxon>
        <taxon>Bacillales</taxon>
        <taxon>Staphylococcaceae</taxon>
        <taxon>Staphylococcus</taxon>
    </lineage>
</organism>
<reference key="1">
    <citation type="journal article" date="2005" name="Proc. Natl. Acad. Sci. U.S.A.">
        <title>Whole genome sequence of Staphylococcus saprophyticus reveals the pathogenesis of uncomplicated urinary tract infection.</title>
        <authorList>
            <person name="Kuroda M."/>
            <person name="Yamashita A."/>
            <person name="Hirakawa H."/>
            <person name="Kumano M."/>
            <person name="Morikawa K."/>
            <person name="Higashide M."/>
            <person name="Maruyama A."/>
            <person name="Inose Y."/>
            <person name="Matoba K."/>
            <person name="Toh H."/>
            <person name="Kuhara S."/>
            <person name="Hattori M."/>
            <person name="Ohta T."/>
        </authorList>
    </citation>
    <scope>NUCLEOTIDE SEQUENCE [LARGE SCALE GENOMIC DNA]</scope>
    <source>
        <strain>ATCC 15305 / DSM 20229 / NCIMB 8711 / NCTC 7292 / S-41</strain>
    </source>
</reference>